<accession>Q0VSI5</accession>
<sequence length="60" mass="6717">MAEKIKVKLVKSTNGRLEKHRACVRGLGLRRIGHTVEVEDTPSVRGMINKVSYLVQVEGE</sequence>
<feature type="chain" id="PRO_0000273737" description="Large ribosomal subunit protein uL30">
    <location>
        <begin position="1"/>
        <end position="60"/>
    </location>
</feature>
<proteinExistence type="inferred from homology"/>
<evidence type="ECO:0000255" key="1">
    <source>
        <dbReference type="HAMAP-Rule" id="MF_01371"/>
    </source>
</evidence>
<evidence type="ECO:0000305" key="2"/>
<name>RL30_ALCBS</name>
<reference key="1">
    <citation type="journal article" date="2006" name="Nat. Biotechnol.">
        <title>Genome sequence of the ubiquitous hydrocarbon-degrading marine bacterium Alcanivorax borkumensis.</title>
        <authorList>
            <person name="Schneiker S."/>
            <person name="Martins dos Santos V.A.P."/>
            <person name="Bartels D."/>
            <person name="Bekel T."/>
            <person name="Brecht M."/>
            <person name="Buhrmester J."/>
            <person name="Chernikova T.N."/>
            <person name="Denaro R."/>
            <person name="Ferrer M."/>
            <person name="Gertler C."/>
            <person name="Goesmann A."/>
            <person name="Golyshina O.V."/>
            <person name="Kaminski F."/>
            <person name="Khachane A.N."/>
            <person name="Lang S."/>
            <person name="Linke B."/>
            <person name="McHardy A.C."/>
            <person name="Meyer F."/>
            <person name="Nechitaylo T."/>
            <person name="Puehler A."/>
            <person name="Regenhardt D."/>
            <person name="Rupp O."/>
            <person name="Sabirova J.S."/>
            <person name="Selbitschka W."/>
            <person name="Yakimov M.M."/>
            <person name="Timmis K.N."/>
            <person name="Vorhoelter F.-J."/>
            <person name="Weidner S."/>
            <person name="Kaiser O."/>
            <person name="Golyshin P.N."/>
        </authorList>
    </citation>
    <scope>NUCLEOTIDE SEQUENCE [LARGE SCALE GENOMIC DNA]</scope>
    <source>
        <strain>ATCC 700651 / DSM 11573 / NCIMB 13689 / SK2</strain>
    </source>
</reference>
<keyword id="KW-1185">Reference proteome</keyword>
<keyword id="KW-0687">Ribonucleoprotein</keyword>
<keyword id="KW-0689">Ribosomal protein</keyword>
<gene>
    <name evidence="1" type="primary">rpmD</name>
    <name type="ordered locus">ABO_0415</name>
</gene>
<organism>
    <name type="scientific">Alcanivorax borkumensis (strain ATCC 700651 / DSM 11573 / NCIMB 13689 / SK2)</name>
    <dbReference type="NCBI Taxonomy" id="393595"/>
    <lineage>
        <taxon>Bacteria</taxon>
        <taxon>Pseudomonadati</taxon>
        <taxon>Pseudomonadota</taxon>
        <taxon>Gammaproteobacteria</taxon>
        <taxon>Oceanospirillales</taxon>
        <taxon>Alcanivoracaceae</taxon>
        <taxon>Alcanivorax</taxon>
    </lineage>
</organism>
<comment type="subunit">
    <text evidence="1">Part of the 50S ribosomal subunit.</text>
</comment>
<comment type="similarity">
    <text evidence="1">Belongs to the universal ribosomal protein uL30 family.</text>
</comment>
<protein>
    <recommendedName>
        <fullName evidence="1">Large ribosomal subunit protein uL30</fullName>
    </recommendedName>
    <alternativeName>
        <fullName evidence="2">50S ribosomal protein L30</fullName>
    </alternativeName>
</protein>
<dbReference type="EMBL" id="AM286690">
    <property type="protein sequence ID" value="CAL15863.1"/>
    <property type="molecule type" value="Genomic_DNA"/>
</dbReference>
<dbReference type="RefSeq" id="WP_007149547.1">
    <property type="nucleotide sequence ID" value="NC_008260.1"/>
</dbReference>
<dbReference type="SMR" id="Q0VSI5"/>
<dbReference type="STRING" id="393595.ABO_0415"/>
<dbReference type="KEGG" id="abo:ABO_0415"/>
<dbReference type="eggNOG" id="COG1841">
    <property type="taxonomic scope" value="Bacteria"/>
</dbReference>
<dbReference type="HOGENOM" id="CLU_131047_1_4_6"/>
<dbReference type="OrthoDB" id="9812790at2"/>
<dbReference type="Proteomes" id="UP000008871">
    <property type="component" value="Chromosome"/>
</dbReference>
<dbReference type="GO" id="GO:0022625">
    <property type="term" value="C:cytosolic large ribosomal subunit"/>
    <property type="evidence" value="ECO:0007669"/>
    <property type="project" value="TreeGrafter"/>
</dbReference>
<dbReference type="GO" id="GO:0003735">
    <property type="term" value="F:structural constituent of ribosome"/>
    <property type="evidence" value="ECO:0007669"/>
    <property type="project" value="InterPro"/>
</dbReference>
<dbReference type="GO" id="GO:0006412">
    <property type="term" value="P:translation"/>
    <property type="evidence" value="ECO:0007669"/>
    <property type="project" value="UniProtKB-UniRule"/>
</dbReference>
<dbReference type="CDD" id="cd01658">
    <property type="entry name" value="Ribosomal_L30"/>
    <property type="match status" value="1"/>
</dbReference>
<dbReference type="FunFam" id="3.30.1390.20:FF:000001">
    <property type="entry name" value="50S ribosomal protein L30"/>
    <property type="match status" value="1"/>
</dbReference>
<dbReference type="Gene3D" id="3.30.1390.20">
    <property type="entry name" value="Ribosomal protein L30, ferredoxin-like fold domain"/>
    <property type="match status" value="1"/>
</dbReference>
<dbReference type="HAMAP" id="MF_01371_B">
    <property type="entry name" value="Ribosomal_uL30_B"/>
    <property type="match status" value="1"/>
</dbReference>
<dbReference type="InterPro" id="IPR036919">
    <property type="entry name" value="Ribo_uL30_ferredoxin-like_sf"/>
</dbReference>
<dbReference type="InterPro" id="IPR005996">
    <property type="entry name" value="Ribosomal_uL30_bac-type"/>
</dbReference>
<dbReference type="InterPro" id="IPR016082">
    <property type="entry name" value="Ribosomal_uL30_ferredoxin-like"/>
</dbReference>
<dbReference type="NCBIfam" id="TIGR01308">
    <property type="entry name" value="rpmD_bact"/>
    <property type="match status" value="1"/>
</dbReference>
<dbReference type="PANTHER" id="PTHR15892:SF2">
    <property type="entry name" value="LARGE RIBOSOMAL SUBUNIT PROTEIN UL30M"/>
    <property type="match status" value="1"/>
</dbReference>
<dbReference type="PANTHER" id="PTHR15892">
    <property type="entry name" value="MITOCHONDRIAL RIBOSOMAL PROTEIN L30"/>
    <property type="match status" value="1"/>
</dbReference>
<dbReference type="Pfam" id="PF00327">
    <property type="entry name" value="Ribosomal_L30"/>
    <property type="match status" value="1"/>
</dbReference>
<dbReference type="PIRSF" id="PIRSF002211">
    <property type="entry name" value="Ribosomal_L30_bac-type"/>
    <property type="match status" value="1"/>
</dbReference>
<dbReference type="SUPFAM" id="SSF55129">
    <property type="entry name" value="Ribosomal protein L30p/L7e"/>
    <property type="match status" value="1"/>
</dbReference>